<comment type="function">
    <text evidence="1">Digests double-stranded RNA. Involved in the processing of primary rRNA transcript to yield the immediate precursors to the large and small rRNAs (23S and 16S). Processes some mRNAs, and tRNAs when they are encoded in the rRNA operon. Processes pre-crRNA and tracrRNA of type II CRISPR loci if present in the organism.</text>
</comment>
<comment type="catalytic activity">
    <reaction evidence="1">
        <text>Endonucleolytic cleavage to 5'-phosphomonoester.</text>
        <dbReference type="EC" id="3.1.26.3"/>
    </reaction>
</comment>
<comment type="cofactor">
    <cofactor evidence="1">
        <name>Mg(2+)</name>
        <dbReference type="ChEBI" id="CHEBI:18420"/>
    </cofactor>
</comment>
<comment type="subunit">
    <text evidence="1">Homodimer.</text>
</comment>
<comment type="subcellular location">
    <subcellularLocation>
        <location evidence="1">Cytoplasm</location>
    </subcellularLocation>
</comment>
<comment type="similarity">
    <text evidence="1">Belongs to the ribonuclease III family.</text>
</comment>
<protein>
    <recommendedName>
        <fullName evidence="1">Ribonuclease 3</fullName>
        <ecNumber evidence="1">3.1.26.3</ecNumber>
    </recommendedName>
    <alternativeName>
        <fullName evidence="1">Ribonuclease III</fullName>
        <shortName evidence="1">RNase III</shortName>
    </alternativeName>
</protein>
<gene>
    <name evidence="1" type="primary">rnc</name>
    <name type="ordered locus">LAF_1238</name>
</gene>
<proteinExistence type="inferred from homology"/>
<sequence>MITQLQDYLAKTYGIHFNNPALLAEAFTQASYVNEHPHENLKYYERIEFLGDAVLQLFVSEYIYRRYPELPQGKLTRLRAAMVCEDSFSKFAKECHFDQYIRLGKGEEMAGARNRASLLCDIFESFIGALYLDQGRQAVEQFIQTVIFPKLDLGWFDHAVDAKTSLQEFLQRNGDVAIEYDLLSEGGTENDPVFEVEVTVDGKKVATGQGSSKKHAEMEAAKHALEKLRMDK</sequence>
<feature type="chain" id="PRO_1000094117" description="Ribonuclease 3">
    <location>
        <begin position="1"/>
        <end position="232"/>
    </location>
</feature>
<feature type="domain" description="RNase III" evidence="1">
    <location>
        <begin position="6"/>
        <end position="135"/>
    </location>
</feature>
<feature type="domain" description="DRBM" evidence="1">
    <location>
        <begin position="161"/>
        <end position="230"/>
    </location>
</feature>
<feature type="active site" evidence="1">
    <location>
        <position position="52"/>
    </location>
</feature>
<feature type="active site" evidence="1">
    <location>
        <position position="124"/>
    </location>
</feature>
<feature type="binding site" evidence="1">
    <location>
        <position position="48"/>
    </location>
    <ligand>
        <name>Mg(2+)</name>
        <dbReference type="ChEBI" id="CHEBI:18420"/>
    </ligand>
</feature>
<feature type="binding site" evidence="1">
    <location>
        <position position="121"/>
    </location>
    <ligand>
        <name>Mg(2+)</name>
        <dbReference type="ChEBI" id="CHEBI:18420"/>
    </ligand>
</feature>
<feature type="binding site" evidence="1">
    <location>
        <position position="124"/>
    </location>
    <ligand>
        <name>Mg(2+)</name>
        <dbReference type="ChEBI" id="CHEBI:18420"/>
    </ligand>
</feature>
<organism>
    <name type="scientific">Limosilactobacillus fermentum (strain NBRC 3956 / LMG 18251)</name>
    <name type="common">Lactobacillus fermentum</name>
    <dbReference type="NCBI Taxonomy" id="334390"/>
    <lineage>
        <taxon>Bacteria</taxon>
        <taxon>Bacillati</taxon>
        <taxon>Bacillota</taxon>
        <taxon>Bacilli</taxon>
        <taxon>Lactobacillales</taxon>
        <taxon>Lactobacillaceae</taxon>
        <taxon>Limosilactobacillus</taxon>
    </lineage>
</organism>
<reference key="1">
    <citation type="journal article" date="2008" name="DNA Res.">
        <title>Comparative genome analysis of Lactobacillus reuteri and Lactobacillus fermentum reveal a genomic island for reuterin and cobalamin production.</title>
        <authorList>
            <person name="Morita H."/>
            <person name="Toh H."/>
            <person name="Fukuda S."/>
            <person name="Horikawa H."/>
            <person name="Oshima K."/>
            <person name="Suzuki T."/>
            <person name="Murakami M."/>
            <person name="Hisamatsu S."/>
            <person name="Kato Y."/>
            <person name="Takizawa T."/>
            <person name="Fukuoka H."/>
            <person name="Yoshimura T."/>
            <person name="Itoh K."/>
            <person name="O'Sullivan D.J."/>
            <person name="McKay L.L."/>
            <person name="Ohno H."/>
            <person name="Kikuchi J."/>
            <person name="Masaoka T."/>
            <person name="Hattori M."/>
        </authorList>
    </citation>
    <scope>NUCLEOTIDE SEQUENCE [LARGE SCALE GENOMIC DNA]</scope>
    <source>
        <strain>NBRC 3956 / LMG 18251</strain>
    </source>
</reference>
<name>RNC_LIMF3</name>
<accession>B2GD42</accession>
<evidence type="ECO:0000255" key="1">
    <source>
        <dbReference type="HAMAP-Rule" id="MF_00104"/>
    </source>
</evidence>
<dbReference type="EC" id="3.1.26.3" evidence="1"/>
<dbReference type="EMBL" id="AP008937">
    <property type="protein sequence ID" value="BAG27574.1"/>
    <property type="molecule type" value="Genomic_DNA"/>
</dbReference>
<dbReference type="RefSeq" id="WP_003683860.1">
    <property type="nucleotide sequence ID" value="NC_010610.1"/>
</dbReference>
<dbReference type="SMR" id="B2GD42"/>
<dbReference type="KEGG" id="lfe:LAF_1238"/>
<dbReference type="eggNOG" id="COG0571">
    <property type="taxonomic scope" value="Bacteria"/>
</dbReference>
<dbReference type="HOGENOM" id="CLU_000907_1_3_9"/>
<dbReference type="Proteomes" id="UP000001697">
    <property type="component" value="Chromosome"/>
</dbReference>
<dbReference type="GO" id="GO:0005737">
    <property type="term" value="C:cytoplasm"/>
    <property type="evidence" value="ECO:0007669"/>
    <property type="project" value="UniProtKB-SubCell"/>
</dbReference>
<dbReference type="GO" id="GO:0003725">
    <property type="term" value="F:double-stranded RNA binding"/>
    <property type="evidence" value="ECO:0007669"/>
    <property type="project" value="TreeGrafter"/>
</dbReference>
<dbReference type="GO" id="GO:0046872">
    <property type="term" value="F:metal ion binding"/>
    <property type="evidence" value="ECO:0007669"/>
    <property type="project" value="UniProtKB-KW"/>
</dbReference>
<dbReference type="GO" id="GO:0004525">
    <property type="term" value="F:ribonuclease III activity"/>
    <property type="evidence" value="ECO:0007669"/>
    <property type="project" value="UniProtKB-UniRule"/>
</dbReference>
<dbReference type="GO" id="GO:0019843">
    <property type="term" value="F:rRNA binding"/>
    <property type="evidence" value="ECO:0007669"/>
    <property type="project" value="UniProtKB-KW"/>
</dbReference>
<dbReference type="GO" id="GO:0006397">
    <property type="term" value="P:mRNA processing"/>
    <property type="evidence" value="ECO:0007669"/>
    <property type="project" value="UniProtKB-UniRule"/>
</dbReference>
<dbReference type="GO" id="GO:0010468">
    <property type="term" value="P:regulation of gene expression"/>
    <property type="evidence" value="ECO:0007669"/>
    <property type="project" value="TreeGrafter"/>
</dbReference>
<dbReference type="GO" id="GO:0006364">
    <property type="term" value="P:rRNA processing"/>
    <property type="evidence" value="ECO:0007669"/>
    <property type="project" value="UniProtKB-UniRule"/>
</dbReference>
<dbReference type="GO" id="GO:0008033">
    <property type="term" value="P:tRNA processing"/>
    <property type="evidence" value="ECO:0007669"/>
    <property type="project" value="UniProtKB-KW"/>
</dbReference>
<dbReference type="CDD" id="cd10845">
    <property type="entry name" value="DSRM_RNAse_III_family"/>
    <property type="match status" value="1"/>
</dbReference>
<dbReference type="CDD" id="cd00593">
    <property type="entry name" value="RIBOc"/>
    <property type="match status" value="1"/>
</dbReference>
<dbReference type="FunFam" id="1.10.1520.10:FF:000001">
    <property type="entry name" value="Ribonuclease 3"/>
    <property type="match status" value="1"/>
</dbReference>
<dbReference type="FunFam" id="3.30.160.20:FF:000003">
    <property type="entry name" value="Ribonuclease 3"/>
    <property type="match status" value="1"/>
</dbReference>
<dbReference type="Gene3D" id="3.30.160.20">
    <property type="match status" value="1"/>
</dbReference>
<dbReference type="Gene3D" id="1.10.1520.10">
    <property type="entry name" value="Ribonuclease III domain"/>
    <property type="match status" value="1"/>
</dbReference>
<dbReference type="HAMAP" id="MF_00104">
    <property type="entry name" value="RNase_III"/>
    <property type="match status" value="1"/>
</dbReference>
<dbReference type="InterPro" id="IPR014720">
    <property type="entry name" value="dsRBD_dom"/>
</dbReference>
<dbReference type="InterPro" id="IPR011907">
    <property type="entry name" value="RNase_III"/>
</dbReference>
<dbReference type="InterPro" id="IPR000999">
    <property type="entry name" value="RNase_III_dom"/>
</dbReference>
<dbReference type="InterPro" id="IPR036389">
    <property type="entry name" value="RNase_III_sf"/>
</dbReference>
<dbReference type="NCBIfam" id="TIGR02191">
    <property type="entry name" value="RNaseIII"/>
    <property type="match status" value="1"/>
</dbReference>
<dbReference type="PANTHER" id="PTHR11207:SF0">
    <property type="entry name" value="RIBONUCLEASE 3"/>
    <property type="match status" value="1"/>
</dbReference>
<dbReference type="PANTHER" id="PTHR11207">
    <property type="entry name" value="RIBONUCLEASE III"/>
    <property type="match status" value="1"/>
</dbReference>
<dbReference type="Pfam" id="PF00035">
    <property type="entry name" value="dsrm"/>
    <property type="match status" value="1"/>
</dbReference>
<dbReference type="Pfam" id="PF14622">
    <property type="entry name" value="Ribonucleas_3_3"/>
    <property type="match status" value="1"/>
</dbReference>
<dbReference type="SMART" id="SM00358">
    <property type="entry name" value="DSRM"/>
    <property type="match status" value="1"/>
</dbReference>
<dbReference type="SMART" id="SM00535">
    <property type="entry name" value="RIBOc"/>
    <property type="match status" value="1"/>
</dbReference>
<dbReference type="SUPFAM" id="SSF54768">
    <property type="entry name" value="dsRNA-binding domain-like"/>
    <property type="match status" value="1"/>
</dbReference>
<dbReference type="SUPFAM" id="SSF69065">
    <property type="entry name" value="RNase III domain-like"/>
    <property type="match status" value="1"/>
</dbReference>
<dbReference type="PROSITE" id="PS50137">
    <property type="entry name" value="DS_RBD"/>
    <property type="match status" value="1"/>
</dbReference>
<dbReference type="PROSITE" id="PS50142">
    <property type="entry name" value="RNASE_3_2"/>
    <property type="match status" value="1"/>
</dbReference>
<keyword id="KW-0963">Cytoplasm</keyword>
<keyword id="KW-0255">Endonuclease</keyword>
<keyword id="KW-0378">Hydrolase</keyword>
<keyword id="KW-0460">Magnesium</keyword>
<keyword id="KW-0479">Metal-binding</keyword>
<keyword id="KW-0507">mRNA processing</keyword>
<keyword id="KW-0540">Nuclease</keyword>
<keyword id="KW-1185">Reference proteome</keyword>
<keyword id="KW-0694">RNA-binding</keyword>
<keyword id="KW-0698">rRNA processing</keyword>
<keyword id="KW-0699">rRNA-binding</keyword>
<keyword id="KW-0819">tRNA processing</keyword>